<organism>
    <name type="scientific">Macaca fascicularis</name>
    <name type="common">Crab-eating macaque</name>
    <name type="synonym">Cynomolgus monkey</name>
    <dbReference type="NCBI Taxonomy" id="9541"/>
    <lineage>
        <taxon>Eukaryota</taxon>
        <taxon>Metazoa</taxon>
        <taxon>Chordata</taxon>
        <taxon>Craniata</taxon>
        <taxon>Vertebrata</taxon>
        <taxon>Euteleostomi</taxon>
        <taxon>Mammalia</taxon>
        <taxon>Eutheria</taxon>
        <taxon>Euarchontoglires</taxon>
        <taxon>Primates</taxon>
        <taxon>Haplorrhini</taxon>
        <taxon>Catarrhini</taxon>
        <taxon>Cercopithecidae</taxon>
        <taxon>Cercopithecinae</taxon>
        <taxon>Macaca</taxon>
    </lineage>
</organism>
<reference key="1">
    <citation type="submission" date="2003-10" db="EMBL/GenBank/DDBJ databases">
        <title>Isolation and characterization of cDNA for macaque neurological disease genes.</title>
        <authorList>
            <person name="Kusuda J."/>
            <person name="Osada N."/>
            <person name="Tanuma R."/>
            <person name="Hirata M."/>
            <person name="Sugano S."/>
            <person name="Hashimoto K."/>
        </authorList>
    </citation>
    <scope>NUCLEOTIDE SEQUENCE [LARGE SCALE MRNA]</scope>
    <source>
        <tissue>Brain cortex</tissue>
    </source>
</reference>
<reference key="2">
    <citation type="submission" date="2005-06" db="EMBL/GenBank/DDBJ databases">
        <title>DNA sequences of macaque genes expressed in brain or testis and its evolutionary implications.</title>
        <authorList>
            <consortium name="International consortium for macaque cDNA sequencing and analysis"/>
        </authorList>
    </citation>
    <scope>NUCLEOTIDE SEQUENCE [LARGE SCALE MRNA]</scope>
    <source>
        <tissue>Brain cortex</tissue>
    </source>
</reference>
<keyword id="KW-1015">Disulfide bond</keyword>
<keyword id="KW-0325">Glycoprotein</keyword>
<keyword id="KW-0326">Glycosidase</keyword>
<keyword id="KW-0378">Hydrolase</keyword>
<keyword id="KW-0458">Lysosome</keyword>
<keyword id="KW-1185">Reference proteome</keyword>
<keyword id="KW-0732">Signal</keyword>
<keyword id="KW-0865">Zymogen</keyword>
<comment type="function">
    <text evidence="2">Cleaves beta-linked terminal galactosyl residues from gangliosides, glycoproteins, and glycosaminoglycans.</text>
</comment>
<comment type="catalytic activity">
    <reaction evidence="2">
        <text>Hydrolysis of terminal non-reducing beta-D-galactose residues in beta-D-galactosides.</text>
        <dbReference type="EC" id="3.2.1.23"/>
    </reaction>
</comment>
<comment type="subunit">
    <text evidence="2">Homodimer. May form higher multimers.</text>
</comment>
<comment type="subcellular location">
    <subcellularLocation>
        <location evidence="2">Lysosome</location>
    </subcellularLocation>
</comment>
<comment type="similarity">
    <text evidence="4">Belongs to the glycosyl hydrolase 35 family.</text>
</comment>
<dbReference type="EC" id="3.2.1.23" evidence="2"/>
<dbReference type="EMBL" id="AB125171">
    <property type="protein sequence ID" value="BAD51959.1"/>
    <property type="molecule type" value="mRNA"/>
</dbReference>
<dbReference type="EMBL" id="AB169680">
    <property type="protein sequence ID" value="BAE01761.1"/>
    <property type="molecule type" value="mRNA"/>
</dbReference>
<dbReference type="RefSeq" id="NP_001306360.1">
    <property type="nucleotide sequence ID" value="NM_001319431.1"/>
</dbReference>
<dbReference type="SMR" id="Q60HF6"/>
<dbReference type="STRING" id="9541.ENSMFAP00000010051"/>
<dbReference type="CAZy" id="GH35">
    <property type="family name" value="Glycoside Hydrolase Family 35"/>
</dbReference>
<dbReference type="GlyCosmos" id="Q60HF6">
    <property type="glycosylation" value="6 sites, No reported glycans"/>
</dbReference>
<dbReference type="eggNOG" id="KOG0496">
    <property type="taxonomic scope" value="Eukaryota"/>
</dbReference>
<dbReference type="Proteomes" id="UP000233100">
    <property type="component" value="Unplaced"/>
</dbReference>
<dbReference type="GO" id="GO:0005764">
    <property type="term" value="C:lysosome"/>
    <property type="evidence" value="ECO:0007669"/>
    <property type="project" value="UniProtKB-SubCell"/>
</dbReference>
<dbReference type="GO" id="GO:0004565">
    <property type="term" value="F:beta-galactosidase activity"/>
    <property type="evidence" value="ECO:0000250"/>
    <property type="project" value="UniProtKB"/>
</dbReference>
<dbReference type="GO" id="GO:0005975">
    <property type="term" value="P:carbohydrate metabolic process"/>
    <property type="evidence" value="ECO:0007669"/>
    <property type="project" value="InterPro"/>
</dbReference>
<dbReference type="FunFam" id="2.60.120.260:FF:000115">
    <property type="entry name" value="Beta-galactosidase"/>
    <property type="match status" value="1"/>
</dbReference>
<dbReference type="FunFam" id="2.60.120.260:FF:000260">
    <property type="entry name" value="Beta-galactosidase"/>
    <property type="match status" value="1"/>
</dbReference>
<dbReference type="FunFam" id="3.20.20.80:FF:000017">
    <property type="entry name" value="Beta-galactosidase"/>
    <property type="match status" value="1"/>
</dbReference>
<dbReference type="Gene3D" id="2.60.120.260">
    <property type="entry name" value="Galactose-binding domain-like"/>
    <property type="match status" value="2"/>
</dbReference>
<dbReference type="Gene3D" id="3.20.20.80">
    <property type="entry name" value="Glycosidases"/>
    <property type="match status" value="1"/>
</dbReference>
<dbReference type="InterPro" id="IPR026283">
    <property type="entry name" value="B-gal_1-like"/>
</dbReference>
<dbReference type="InterPro" id="IPR048912">
    <property type="entry name" value="BetaGal1-like_ABD1"/>
</dbReference>
<dbReference type="InterPro" id="IPR048913">
    <property type="entry name" value="BetaGal_gal-bd"/>
</dbReference>
<dbReference type="InterPro" id="IPR008979">
    <property type="entry name" value="Galactose-bd-like_sf"/>
</dbReference>
<dbReference type="InterPro" id="IPR031330">
    <property type="entry name" value="Gly_Hdrlase_35_cat"/>
</dbReference>
<dbReference type="InterPro" id="IPR019801">
    <property type="entry name" value="Glyco_hydro_35_CS"/>
</dbReference>
<dbReference type="InterPro" id="IPR001944">
    <property type="entry name" value="Glycoside_Hdrlase_35"/>
</dbReference>
<dbReference type="InterPro" id="IPR017853">
    <property type="entry name" value="Glycoside_hydrolase_SF"/>
</dbReference>
<dbReference type="PANTHER" id="PTHR23421">
    <property type="entry name" value="BETA-GALACTOSIDASE RELATED"/>
    <property type="match status" value="1"/>
</dbReference>
<dbReference type="Pfam" id="PF21317">
    <property type="entry name" value="BetaGal_ABD_1"/>
    <property type="match status" value="1"/>
</dbReference>
<dbReference type="Pfam" id="PF21467">
    <property type="entry name" value="BetaGal_gal-bd"/>
    <property type="match status" value="1"/>
</dbReference>
<dbReference type="Pfam" id="PF01301">
    <property type="entry name" value="Glyco_hydro_35"/>
    <property type="match status" value="1"/>
</dbReference>
<dbReference type="PIRSF" id="PIRSF006336">
    <property type="entry name" value="B-gal"/>
    <property type="match status" value="1"/>
</dbReference>
<dbReference type="PRINTS" id="PR00742">
    <property type="entry name" value="GLHYDRLASE35"/>
</dbReference>
<dbReference type="SUPFAM" id="SSF51445">
    <property type="entry name" value="(Trans)glycosidases"/>
    <property type="match status" value="1"/>
</dbReference>
<dbReference type="SUPFAM" id="SSF49785">
    <property type="entry name" value="Galactose-binding domain-like"/>
    <property type="match status" value="1"/>
</dbReference>
<dbReference type="PROSITE" id="PS01182">
    <property type="entry name" value="GLYCOSYL_HYDROL_F35"/>
    <property type="match status" value="1"/>
</dbReference>
<gene>
    <name type="primary">GLB1</name>
    <name type="ORF">QccE-15801</name>
    <name type="ORF">QccE-17236</name>
</gene>
<feature type="signal peptide" evidence="3">
    <location>
        <begin position="1"/>
        <end position="23"/>
    </location>
</feature>
<feature type="propeptide" id="PRO_0000012188" evidence="1">
    <location>
        <begin position="24"/>
        <end position="28"/>
    </location>
</feature>
<feature type="chain" id="PRO_0000012189" description="Beta-galactosidase">
    <location>
        <begin position="29"/>
        <end position="682"/>
    </location>
</feature>
<feature type="active site" description="Proton donor" evidence="2">
    <location>
        <position position="188"/>
    </location>
</feature>
<feature type="active site" description="Nucleophile" evidence="2">
    <location>
        <position position="268"/>
    </location>
</feature>
<feature type="binding site" evidence="2">
    <location>
        <position position="83"/>
    </location>
    <ligand>
        <name>substrate</name>
    </ligand>
</feature>
<feature type="binding site" evidence="2">
    <location>
        <position position="129"/>
    </location>
    <ligand>
        <name>substrate</name>
    </ligand>
</feature>
<feature type="binding site" evidence="2">
    <location>
        <position position="187"/>
    </location>
    <ligand>
        <name>substrate</name>
    </ligand>
</feature>
<feature type="binding site" evidence="2">
    <location>
        <position position="333"/>
    </location>
    <ligand>
        <name>substrate</name>
    </ligand>
</feature>
<feature type="glycosylation site" description="N-linked (GlcNAc...) asparagine" evidence="3">
    <location>
        <position position="26"/>
    </location>
</feature>
<feature type="glycosylation site" description="N-linked (GlcNAc...) asparagine" evidence="3">
    <location>
        <position position="247"/>
    </location>
</feature>
<feature type="glycosylation site" description="N-linked (GlcNAc...) asparagine" evidence="3">
    <location>
        <position position="464"/>
    </location>
</feature>
<feature type="glycosylation site" description="N-linked (GlcNAc...) asparagine" evidence="3">
    <location>
        <position position="498"/>
    </location>
</feature>
<feature type="glycosylation site" description="N-linked (GlcNAc...) asparagine" evidence="3">
    <location>
        <position position="545"/>
    </location>
</feature>
<feature type="glycosylation site" description="N-linked (GlcNAc...) asparagine" evidence="3">
    <location>
        <position position="555"/>
    </location>
</feature>
<feature type="disulfide bond" evidence="2">
    <location>
        <begin position="195"/>
        <end position="230"/>
    </location>
</feature>
<feature type="disulfide bond" evidence="2">
    <location>
        <begin position="626"/>
        <end position="634"/>
    </location>
</feature>
<sequence>MPGFLVRILPLLLPLLLLGPTRGLRNATRRVFEIAYSQDRFLKDGQPFRYISGSIHYSRVPRFYWKDRLLKMKMAGLNTIQTYVPWNFHEPWPGQYQFSEDHDVEYFLRLAHELGLLVILRPGPYICAEWEMGGLPAWLLEKEAILLRSSDPDYLAAVDKWLGVLLPKMKPLLYQNGGPIITVQVENEYGSYFACDFDYLRFLQKRFHHHLGDDVVLFTTDGAHETFLQCGALQGLYTTVDFGPGSNITDAFQIQRKCEPKGPLINSEFYTGWLDHWGQPHSTIKTEVVASSLYDILARGASVNLYMFIGGTNFAYWNGANSPYAAQPTSYDYDAPLSEAGDLTEKYFALRNVIQKFEKVPEGPIPPSTPKFAYGKVSLEKLKTVGAALDILCPSGPIKSLYPLTFIQVKQYYGFVLYRTTLPQDCSNSTPLSSPFNGVHDRAYVAVDGIPQGVLERNRVITLNITGKTGATLDLLVENMGRVNYGAYINDFKGLVSNLTLDSNILTGWTIFPLDTEDAVRSHLGGWEHRDSGRHDEAWAHSSSNYTLPAFYVGNFSIPSGIPDLPQDTFIQFPGWTKGQVWINGFNLGRYWPARGPQLTLFVPQHILMTSAPNTITVLELERAPCSSDGPELCAVEFVDRPVIGSSQIYDHLSKPVEQRLMAPPPKKTKIRGWSMYDDESL</sequence>
<accession>Q60HF6</accession>
<accession>Q4R564</accession>
<proteinExistence type="evidence at transcript level"/>
<protein>
    <recommendedName>
        <fullName>Beta-galactosidase</fullName>
        <ecNumber evidence="2">3.2.1.23</ecNumber>
    </recommendedName>
    <alternativeName>
        <fullName>Acid beta-galactosidase</fullName>
        <shortName>Lactase</shortName>
    </alternativeName>
</protein>
<name>BGAL_MACFA</name>
<evidence type="ECO:0000250" key="1"/>
<evidence type="ECO:0000250" key="2">
    <source>
        <dbReference type="UniProtKB" id="P16278"/>
    </source>
</evidence>
<evidence type="ECO:0000255" key="3"/>
<evidence type="ECO:0000305" key="4"/>